<sequence>MTLDVFTKVVSQADSRGEFLSNEQLDALANVVKEGNKRLDVVNRITSNASAIVTNAARALFEEQPQLIAPGGNAYTNRRMAACLRDMEIILRYVTYAILAGDASVLDDRCLNGLRETYQALGTPGSSVAVGVQKMKDAAVGIANDPNGITKGDCSQLISEVASYFDRAAAAVG</sequence>
<feature type="initiator methionine" description="Removed" evidence="3">
    <location>
        <position position="1"/>
    </location>
</feature>
<feature type="chain" id="PRO_0000199142" description="C-phycocyanin beta subunit">
    <location>
        <begin position="2"/>
        <end position="173"/>
    </location>
</feature>
<feature type="binding site" description="covalent" evidence="2">
    <location>
        <position position="83"/>
    </location>
    <ligand>
        <name>(2R,3E)-phycocyanobilin</name>
        <dbReference type="ChEBI" id="CHEBI:85275"/>
        <label>1</label>
    </ligand>
</feature>
<feature type="binding site" description="covalent" evidence="2">
    <location>
        <position position="154"/>
    </location>
    <ligand>
        <name>(2R,3E)-phycocyanobilin</name>
        <dbReference type="ChEBI" id="CHEBI:85275"/>
        <label>2</label>
    </ligand>
</feature>
<feature type="modified residue" description="N4-methylasparagine" evidence="2">
    <location>
        <position position="73"/>
    </location>
</feature>
<feature type="sequence conflict" description="In Ref. 1; CAA28862." evidence="5" ref="1">
    <original>S</original>
    <variation>C</variation>
    <location>
        <position position="163"/>
    </location>
</feature>
<feature type="sequence conflict" description="In Ref. 1; CAA28862." evidence="5" ref="1">
    <location>
        <position position="171"/>
    </location>
</feature>
<comment type="function">
    <text>Light-harvesting photosynthetic bile pigment-protein from the phycobiliprotein complex (phycobilisome, PBS). Phycocyanin is the major phycobiliprotein in the PBS rod.</text>
</comment>
<comment type="subunit">
    <text evidence="1 4">Heterodimer of an alpha and a beta subunit. Part of 2 PBS rod complexes, the conventional PBS rod and a photosystem I-specific CpcL-PBS rod (PubMed:24550276).</text>
</comment>
<comment type="subcellular location">
    <subcellularLocation>
        <location evidence="4">Cellular thylakoid membrane</location>
        <topology evidence="1">Peripheral membrane protein</topology>
        <orientation evidence="1">Cytoplasmic side</orientation>
    </subcellularLocation>
    <text evidence="1">Part of the phycobilisome rod.</text>
</comment>
<comment type="PTM">
    <text evidence="1 2">Contains two covalently linked bilin chromophores.</text>
</comment>
<comment type="similarity">
    <text evidence="5">Belongs to the phycobiliprotein family.</text>
</comment>
<protein>
    <recommendedName>
        <fullName>C-phycocyanin beta subunit</fullName>
    </recommendedName>
</protein>
<accession>P07120</accession>
<accession>Q9F460</accession>
<evidence type="ECO:0000250" key="1"/>
<evidence type="ECO:0000250" key="2">
    <source>
        <dbReference type="UniProtKB" id="P06539"/>
    </source>
</evidence>
<evidence type="ECO:0000269" key="3">
    <source>
    </source>
</evidence>
<evidence type="ECO:0000269" key="4">
    <source>
    </source>
</evidence>
<evidence type="ECO:0000305" key="5"/>
<reference key="1">
    <citation type="journal article" date="1987" name="EMBO J.">
        <title>Cloning and light regulation of expression of the phycocyanin operon of the cyanobacterium Anabaena.</title>
        <authorList>
            <person name="Belknap W.R."/>
            <person name="Haselkorn R."/>
        </authorList>
    </citation>
    <scope>NUCLEOTIDE SEQUENCE [GENOMIC DNA]</scope>
</reference>
<reference key="2">
    <citation type="journal article" date="2001" name="Anal. Biochem.">
        <title>Recombinant phycobiliproteins. Recombinant C-phycocyanins equipped with affinity tags, oligomerization, and biospecific recognition domains.</title>
        <authorList>
            <person name="Cai Y.A."/>
            <person name="Murphy J.T."/>
            <person name="Wedemayer G.J."/>
            <person name="Glazer A.N."/>
        </authorList>
    </citation>
    <scope>NUCLEOTIDE SEQUENCE [GENOMIC DNA]</scope>
</reference>
<reference key="3">
    <citation type="journal article" date="2001" name="DNA Res.">
        <title>Complete genomic sequence of the filamentous nitrogen-fixing cyanobacterium Anabaena sp. strain PCC 7120.</title>
        <authorList>
            <person name="Kaneko T."/>
            <person name="Nakamura Y."/>
            <person name="Wolk C.P."/>
            <person name="Kuritz T."/>
            <person name="Sasamoto S."/>
            <person name="Watanabe A."/>
            <person name="Iriguchi M."/>
            <person name="Ishikawa A."/>
            <person name="Kawashima K."/>
            <person name="Kimura T."/>
            <person name="Kishida Y."/>
            <person name="Kohara M."/>
            <person name="Matsumoto M."/>
            <person name="Matsuno A."/>
            <person name="Muraki A."/>
            <person name="Nakazaki N."/>
            <person name="Shimpo S."/>
            <person name="Sugimoto M."/>
            <person name="Takazawa M."/>
            <person name="Yamada M."/>
            <person name="Yasuda M."/>
            <person name="Tabata S."/>
        </authorList>
    </citation>
    <scope>NUCLEOTIDE SEQUENCE [LARGE SCALE GENOMIC DNA]</scope>
    <source>
        <strain>PCC 7120 / SAG 25.82 / UTEX 2576</strain>
    </source>
</reference>
<reference key="4">
    <citation type="journal article" date="2006" name="J. Biol. Chem.">
        <title>Chromophore attachment to phycobiliprotein beta-subunits: phycocyanobilin:cysteine-beta84 phycobiliprotein lyase activity of CpeS-like protein from Anabaena Sp. PCC7120.</title>
        <authorList>
            <person name="Zhao K.H."/>
            <person name="Su P."/>
            <person name="Li J."/>
            <person name="Tu J.M."/>
            <person name="Zhou M."/>
            <person name="Bubenzer C."/>
            <person name="Scheer H."/>
        </authorList>
    </citation>
    <scope>CHROMOPHORE ATTACHMENT</scope>
    <source>
        <strain>PCC 7120 / SAG 25.82 / UTEX 2576</strain>
    </source>
</reference>
<reference key="5">
    <citation type="journal article" date="2014" name="Proc. Natl. Acad. Sci. U.S.A.">
        <title>Attachment of phycobilisomes in an antenna-photosystem I supercomplex of cyanobacteria.</title>
        <authorList>
            <person name="Watanabe M."/>
            <person name="Semchonok D.A."/>
            <person name="Webber-Birungi M.T."/>
            <person name="Ehira S."/>
            <person name="Kondo K."/>
            <person name="Narikawa R."/>
            <person name="Ohmori M."/>
            <person name="Boekema E.J."/>
            <person name="Ikeuchi M."/>
        </authorList>
    </citation>
    <scope>PROTEIN SEQUENCE OF 2-21</scope>
    <scope>SUBUNIT</scope>
    <scope>SUBCELLULAR LOCATION</scope>
    <source>
        <strain>PCC 7120 / SAG 25.82 / UTEX 2576</strain>
    </source>
</reference>
<dbReference type="EMBL" id="X05239">
    <property type="protein sequence ID" value="CAA28862.1"/>
    <property type="molecule type" value="Genomic_DNA"/>
</dbReference>
<dbReference type="EMBL" id="AF178757">
    <property type="protein sequence ID" value="AAG09316.1"/>
    <property type="molecule type" value="Genomic_DNA"/>
</dbReference>
<dbReference type="EMBL" id="BA000019">
    <property type="protein sequence ID" value="BAB72486.1"/>
    <property type="molecule type" value="Genomic_DNA"/>
</dbReference>
<dbReference type="PIR" id="AG1872">
    <property type="entry name" value="AG1872"/>
</dbReference>
<dbReference type="PIR" id="B29674">
    <property type="entry name" value="B29674"/>
</dbReference>
<dbReference type="RefSeq" id="WP_010994704.1">
    <property type="nucleotide sequence ID" value="NZ_RSCN01000059.1"/>
</dbReference>
<dbReference type="PDB" id="7EYD">
    <property type="method" value="EM"/>
    <property type="resolution" value="3.90 A"/>
    <property type="chains" value="C1/C2/C3/C4/C5/C6/C7/CA/E1/E2/E3/E4/E5/E6/E7/EA/G1/G2/G3/G4/G5/G6/G7/GA/I1/I2/I3/I4/I5/I6=1-173"/>
</dbReference>
<dbReference type="PDBsum" id="7EYD"/>
<dbReference type="EMDB" id="EMD-31381"/>
<dbReference type="SMR" id="P07120"/>
<dbReference type="STRING" id="103690.gene:10492539"/>
<dbReference type="KEGG" id="ana:alr0528"/>
<dbReference type="eggNOG" id="ENOG502Z7NE">
    <property type="taxonomic scope" value="Bacteria"/>
</dbReference>
<dbReference type="OrthoDB" id="512145at2"/>
<dbReference type="Proteomes" id="UP000002483">
    <property type="component" value="Chromosome"/>
</dbReference>
<dbReference type="GO" id="GO:0030089">
    <property type="term" value="C:phycobilisome"/>
    <property type="evidence" value="ECO:0007669"/>
    <property type="project" value="UniProtKB-KW"/>
</dbReference>
<dbReference type="GO" id="GO:0031676">
    <property type="term" value="C:plasma membrane-derived thylakoid membrane"/>
    <property type="evidence" value="ECO:0007669"/>
    <property type="project" value="UniProtKB-SubCell"/>
</dbReference>
<dbReference type="GO" id="GO:0015979">
    <property type="term" value="P:photosynthesis"/>
    <property type="evidence" value="ECO:0007669"/>
    <property type="project" value="UniProtKB-KW"/>
</dbReference>
<dbReference type="CDD" id="cd14768">
    <property type="entry name" value="PC_PEC_beta"/>
    <property type="match status" value="1"/>
</dbReference>
<dbReference type="Gene3D" id="1.10.490.20">
    <property type="entry name" value="Phycocyanins"/>
    <property type="match status" value="1"/>
</dbReference>
<dbReference type="InterPro" id="IPR009050">
    <property type="entry name" value="Globin-like_sf"/>
</dbReference>
<dbReference type="InterPro" id="IPR012128">
    <property type="entry name" value="Phycobilisome_asu/bsu"/>
</dbReference>
<dbReference type="InterPro" id="IPR038719">
    <property type="entry name" value="Phycobilisome_asu/bsu_sf"/>
</dbReference>
<dbReference type="InterPro" id="IPR006247">
    <property type="entry name" value="Phycocyanin_b"/>
</dbReference>
<dbReference type="NCBIfam" id="TIGR01339">
    <property type="entry name" value="phycocy_beta"/>
    <property type="match status" value="1"/>
</dbReference>
<dbReference type="PANTHER" id="PTHR34011:SF7">
    <property type="entry name" value="C-PHYCOCYANIN BETA SUBUNIT"/>
    <property type="match status" value="1"/>
</dbReference>
<dbReference type="PANTHER" id="PTHR34011">
    <property type="entry name" value="PHYCOBILISOME 32.1 KDA LINKER POLYPEPTIDE, PHYCOCYANIN-ASSOCIATED, ROD 2-RELATED"/>
    <property type="match status" value="1"/>
</dbReference>
<dbReference type="Pfam" id="PF00502">
    <property type="entry name" value="Phycobilisome"/>
    <property type="match status" value="1"/>
</dbReference>
<dbReference type="PIRSF" id="PIRSF000081">
    <property type="entry name" value="Phycocyanin"/>
    <property type="match status" value="1"/>
</dbReference>
<dbReference type="SUPFAM" id="SSF46458">
    <property type="entry name" value="Globin-like"/>
    <property type="match status" value="1"/>
</dbReference>
<gene>
    <name type="primary">cpcB</name>
    <name type="ordered locus">alr0528</name>
</gene>
<keyword id="KW-0002">3D-structure</keyword>
<keyword id="KW-0042">Antenna complex</keyword>
<keyword id="KW-0089">Bile pigment</keyword>
<keyword id="KW-0157">Chromophore</keyword>
<keyword id="KW-0903">Direct protein sequencing</keyword>
<keyword id="KW-0249">Electron transport</keyword>
<keyword id="KW-0472">Membrane</keyword>
<keyword id="KW-0488">Methylation</keyword>
<keyword id="KW-0602">Photosynthesis</keyword>
<keyword id="KW-0605">Phycobilisome</keyword>
<keyword id="KW-1185">Reference proteome</keyword>
<keyword id="KW-0793">Thylakoid</keyword>
<keyword id="KW-0813">Transport</keyword>
<organism>
    <name type="scientific">Nostoc sp. (strain PCC 7120 / SAG 25.82 / UTEX 2576)</name>
    <dbReference type="NCBI Taxonomy" id="103690"/>
    <lineage>
        <taxon>Bacteria</taxon>
        <taxon>Bacillati</taxon>
        <taxon>Cyanobacteriota</taxon>
        <taxon>Cyanophyceae</taxon>
        <taxon>Nostocales</taxon>
        <taxon>Nostocaceae</taxon>
        <taxon>Nostoc</taxon>
    </lineage>
</organism>
<name>PHCB_NOSS1</name>
<proteinExistence type="evidence at protein level"/>